<feature type="chain" id="PRO_0000305734" description="Small ribosomal subunit protein uS8">
    <location>
        <begin position="1"/>
        <end position="130"/>
    </location>
</feature>
<proteinExistence type="inferred from homology"/>
<protein>
    <recommendedName>
        <fullName evidence="1">Small ribosomal subunit protein uS8</fullName>
    </recommendedName>
    <alternativeName>
        <fullName evidence="2">30S ribosomal protein S8</fullName>
    </alternativeName>
</protein>
<comment type="function">
    <text evidence="1">One of the primary rRNA binding proteins, it binds directly to 16S rRNA central domain where it helps coordinate assembly of the platform of the 30S subunit.</text>
</comment>
<comment type="subunit">
    <text evidence="1">Part of the 30S ribosomal subunit. Contacts proteins S5 and S12.</text>
</comment>
<comment type="similarity">
    <text evidence="1">Belongs to the universal ribosomal protein uS8 family.</text>
</comment>
<keyword id="KW-0687">Ribonucleoprotein</keyword>
<keyword id="KW-0689">Ribosomal protein</keyword>
<keyword id="KW-0694">RNA-binding</keyword>
<keyword id="KW-0699">rRNA-binding</keyword>
<organism>
    <name type="scientific">Aeromonas salmonicida (strain A449)</name>
    <dbReference type="NCBI Taxonomy" id="382245"/>
    <lineage>
        <taxon>Bacteria</taxon>
        <taxon>Pseudomonadati</taxon>
        <taxon>Pseudomonadota</taxon>
        <taxon>Gammaproteobacteria</taxon>
        <taxon>Aeromonadales</taxon>
        <taxon>Aeromonadaceae</taxon>
        <taxon>Aeromonas</taxon>
    </lineage>
</organism>
<gene>
    <name evidence="1" type="primary">rpsH</name>
    <name type="ordered locus">ASA_4073</name>
</gene>
<evidence type="ECO:0000255" key="1">
    <source>
        <dbReference type="HAMAP-Rule" id="MF_01302"/>
    </source>
</evidence>
<evidence type="ECO:0000305" key="2"/>
<accession>A4SSZ2</accession>
<name>RS8_AERS4</name>
<dbReference type="EMBL" id="CP000644">
    <property type="protein sequence ID" value="ABO92014.1"/>
    <property type="molecule type" value="Genomic_DNA"/>
</dbReference>
<dbReference type="RefSeq" id="WP_005307980.1">
    <property type="nucleotide sequence ID" value="NC_009348.1"/>
</dbReference>
<dbReference type="SMR" id="A4SSZ2"/>
<dbReference type="STRING" id="29491.GCA_000820065_03479"/>
<dbReference type="GeneID" id="92721512"/>
<dbReference type="KEGG" id="asa:ASA_4073"/>
<dbReference type="eggNOG" id="COG0096">
    <property type="taxonomic scope" value="Bacteria"/>
</dbReference>
<dbReference type="HOGENOM" id="CLU_098428_0_0_6"/>
<dbReference type="Proteomes" id="UP000000225">
    <property type="component" value="Chromosome"/>
</dbReference>
<dbReference type="GO" id="GO:1990904">
    <property type="term" value="C:ribonucleoprotein complex"/>
    <property type="evidence" value="ECO:0007669"/>
    <property type="project" value="UniProtKB-KW"/>
</dbReference>
<dbReference type="GO" id="GO:0005840">
    <property type="term" value="C:ribosome"/>
    <property type="evidence" value="ECO:0007669"/>
    <property type="project" value="UniProtKB-KW"/>
</dbReference>
<dbReference type="GO" id="GO:0019843">
    <property type="term" value="F:rRNA binding"/>
    <property type="evidence" value="ECO:0007669"/>
    <property type="project" value="UniProtKB-UniRule"/>
</dbReference>
<dbReference type="GO" id="GO:0003735">
    <property type="term" value="F:structural constituent of ribosome"/>
    <property type="evidence" value="ECO:0007669"/>
    <property type="project" value="InterPro"/>
</dbReference>
<dbReference type="GO" id="GO:0006412">
    <property type="term" value="P:translation"/>
    <property type="evidence" value="ECO:0007669"/>
    <property type="project" value="UniProtKB-UniRule"/>
</dbReference>
<dbReference type="FunFam" id="3.30.1370.30:FF:000003">
    <property type="entry name" value="30S ribosomal protein S8"/>
    <property type="match status" value="1"/>
</dbReference>
<dbReference type="FunFam" id="3.30.1490.10:FF:000001">
    <property type="entry name" value="30S ribosomal protein S8"/>
    <property type="match status" value="1"/>
</dbReference>
<dbReference type="Gene3D" id="3.30.1370.30">
    <property type="match status" value="1"/>
</dbReference>
<dbReference type="Gene3D" id="3.30.1490.10">
    <property type="match status" value="1"/>
</dbReference>
<dbReference type="HAMAP" id="MF_01302_B">
    <property type="entry name" value="Ribosomal_uS8_B"/>
    <property type="match status" value="1"/>
</dbReference>
<dbReference type="InterPro" id="IPR000630">
    <property type="entry name" value="Ribosomal_uS8"/>
</dbReference>
<dbReference type="InterPro" id="IPR047863">
    <property type="entry name" value="Ribosomal_uS8_CS"/>
</dbReference>
<dbReference type="InterPro" id="IPR035987">
    <property type="entry name" value="Ribosomal_uS8_sf"/>
</dbReference>
<dbReference type="NCBIfam" id="NF001109">
    <property type="entry name" value="PRK00136.1"/>
    <property type="match status" value="1"/>
</dbReference>
<dbReference type="PANTHER" id="PTHR11758">
    <property type="entry name" value="40S RIBOSOMAL PROTEIN S15A"/>
    <property type="match status" value="1"/>
</dbReference>
<dbReference type="Pfam" id="PF00410">
    <property type="entry name" value="Ribosomal_S8"/>
    <property type="match status" value="1"/>
</dbReference>
<dbReference type="SUPFAM" id="SSF56047">
    <property type="entry name" value="Ribosomal protein S8"/>
    <property type="match status" value="1"/>
</dbReference>
<dbReference type="PROSITE" id="PS00053">
    <property type="entry name" value="RIBOSOMAL_S8"/>
    <property type="match status" value="1"/>
</dbReference>
<sequence>MSMQDPIADMLTRIRNGQAASKVAVSMPSSKLKVAIAKVLKEEGYIAGYSVAGDVKPELEIELKYFQGKPVVELIQRVSRPGLRIYKRTTDLPKVMGGLGVAIVSTSKGVMTDRAARKASMGGEIICYVA</sequence>
<reference key="1">
    <citation type="journal article" date="2008" name="BMC Genomics">
        <title>The genome of Aeromonas salmonicida subsp. salmonicida A449: insights into the evolution of a fish pathogen.</title>
        <authorList>
            <person name="Reith M.E."/>
            <person name="Singh R.K."/>
            <person name="Curtis B."/>
            <person name="Boyd J.M."/>
            <person name="Bouevitch A."/>
            <person name="Kimball J."/>
            <person name="Munholland J."/>
            <person name="Murphy C."/>
            <person name="Sarty D."/>
            <person name="Williams J."/>
            <person name="Nash J.H."/>
            <person name="Johnson S.C."/>
            <person name="Brown L.L."/>
        </authorList>
    </citation>
    <scope>NUCLEOTIDE SEQUENCE [LARGE SCALE GENOMIC DNA]</scope>
    <source>
        <strain>A449</strain>
    </source>
</reference>